<name>RS7_BRUME</name>
<comment type="function">
    <text evidence="1">One of the primary rRNA binding proteins, it binds directly to 16S rRNA where it nucleates assembly of the head domain of the 30S subunit. Is located at the subunit interface close to the decoding center, probably blocks exit of the E-site tRNA.</text>
</comment>
<comment type="subunit">
    <text evidence="1">Part of the 30S ribosomal subunit. Contacts proteins S9 and S11.</text>
</comment>
<comment type="similarity">
    <text evidence="1">Belongs to the universal ribosomal protein uS7 family.</text>
</comment>
<dbReference type="EMBL" id="AE008917">
    <property type="protein sequence ID" value="AAL51934.1"/>
    <property type="molecule type" value="Genomic_DNA"/>
</dbReference>
<dbReference type="PIR" id="AC3346">
    <property type="entry name" value="AC3346"/>
</dbReference>
<dbReference type="RefSeq" id="WP_004686959.1">
    <property type="nucleotide sequence ID" value="NC_003317.1"/>
</dbReference>
<dbReference type="SMR" id="Q8YHP4"/>
<dbReference type="GeneID" id="29593556"/>
<dbReference type="KEGG" id="bme:BMEI0753"/>
<dbReference type="KEGG" id="bmel:DK63_669"/>
<dbReference type="PATRIC" id="fig|224914.52.peg.700"/>
<dbReference type="eggNOG" id="COG0049">
    <property type="taxonomic scope" value="Bacteria"/>
</dbReference>
<dbReference type="PhylomeDB" id="Q8YHP4"/>
<dbReference type="Proteomes" id="UP000000419">
    <property type="component" value="Chromosome I"/>
</dbReference>
<dbReference type="GO" id="GO:0015935">
    <property type="term" value="C:small ribosomal subunit"/>
    <property type="evidence" value="ECO:0007669"/>
    <property type="project" value="InterPro"/>
</dbReference>
<dbReference type="GO" id="GO:0019843">
    <property type="term" value="F:rRNA binding"/>
    <property type="evidence" value="ECO:0007669"/>
    <property type="project" value="UniProtKB-UniRule"/>
</dbReference>
<dbReference type="GO" id="GO:0003735">
    <property type="term" value="F:structural constituent of ribosome"/>
    <property type="evidence" value="ECO:0007669"/>
    <property type="project" value="InterPro"/>
</dbReference>
<dbReference type="GO" id="GO:0000049">
    <property type="term" value="F:tRNA binding"/>
    <property type="evidence" value="ECO:0007669"/>
    <property type="project" value="UniProtKB-UniRule"/>
</dbReference>
<dbReference type="GO" id="GO:0006412">
    <property type="term" value="P:translation"/>
    <property type="evidence" value="ECO:0007669"/>
    <property type="project" value="UniProtKB-UniRule"/>
</dbReference>
<dbReference type="CDD" id="cd14869">
    <property type="entry name" value="uS7_Bacteria"/>
    <property type="match status" value="1"/>
</dbReference>
<dbReference type="FunFam" id="1.10.455.10:FF:000001">
    <property type="entry name" value="30S ribosomal protein S7"/>
    <property type="match status" value="1"/>
</dbReference>
<dbReference type="Gene3D" id="1.10.455.10">
    <property type="entry name" value="Ribosomal protein S7 domain"/>
    <property type="match status" value="1"/>
</dbReference>
<dbReference type="HAMAP" id="MF_00480_B">
    <property type="entry name" value="Ribosomal_uS7_B"/>
    <property type="match status" value="1"/>
</dbReference>
<dbReference type="InterPro" id="IPR000235">
    <property type="entry name" value="Ribosomal_uS7"/>
</dbReference>
<dbReference type="InterPro" id="IPR005717">
    <property type="entry name" value="Ribosomal_uS7_bac/org-type"/>
</dbReference>
<dbReference type="InterPro" id="IPR020606">
    <property type="entry name" value="Ribosomal_uS7_CS"/>
</dbReference>
<dbReference type="InterPro" id="IPR023798">
    <property type="entry name" value="Ribosomal_uS7_dom"/>
</dbReference>
<dbReference type="InterPro" id="IPR036823">
    <property type="entry name" value="Ribosomal_uS7_dom_sf"/>
</dbReference>
<dbReference type="NCBIfam" id="TIGR01029">
    <property type="entry name" value="rpsG_bact"/>
    <property type="match status" value="1"/>
</dbReference>
<dbReference type="PANTHER" id="PTHR11205">
    <property type="entry name" value="RIBOSOMAL PROTEIN S7"/>
    <property type="match status" value="1"/>
</dbReference>
<dbReference type="Pfam" id="PF00177">
    <property type="entry name" value="Ribosomal_S7"/>
    <property type="match status" value="1"/>
</dbReference>
<dbReference type="PIRSF" id="PIRSF002122">
    <property type="entry name" value="RPS7p_RPS7a_RPS5e_RPS7o"/>
    <property type="match status" value="1"/>
</dbReference>
<dbReference type="SUPFAM" id="SSF47973">
    <property type="entry name" value="Ribosomal protein S7"/>
    <property type="match status" value="1"/>
</dbReference>
<dbReference type="PROSITE" id="PS00052">
    <property type="entry name" value="RIBOSOMAL_S7"/>
    <property type="match status" value="1"/>
</dbReference>
<reference key="1">
    <citation type="journal article" date="2002" name="Proc. Natl. Acad. Sci. U.S.A.">
        <title>The genome sequence of the facultative intracellular pathogen Brucella melitensis.</title>
        <authorList>
            <person name="DelVecchio V.G."/>
            <person name="Kapatral V."/>
            <person name="Redkar R.J."/>
            <person name="Patra G."/>
            <person name="Mujer C."/>
            <person name="Los T."/>
            <person name="Ivanova N."/>
            <person name="Anderson I."/>
            <person name="Bhattacharyya A."/>
            <person name="Lykidis A."/>
            <person name="Reznik G."/>
            <person name="Jablonski L."/>
            <person name="Larsen N."/>
            <person name="D'Souza M."/>
            <person name="Bernal A."/>
            <person name="Mazur M."/>
            <person name="Goltsman E."/>
            <person name="Selkov E."/>
            <person name="Elzer P.H."/>
            <person name="Hagius S."/>
            <person name="O'Callaghan D."/>
            <person name="Letesson J.-J."/>
            <person name="Haselkorn R."/>
            <person name="Kyrpides N.C."/>
            <person name="Overbeek R."/>
        </authorList>
    </citation>
    <scope>NUCLEOTIDE SEQUENCE [LARGE SCALE GENOMIC DNA]</scope>
    <source>
        <strain>ATCC 23456 / CCUG 17765 / NCTC 10094 / 16M</strain>
    </source>
</reference>
<feature type="chain" id="PRO_0000124231" description="Small ribosomal subunit protein uS7">
    <location>
        <begin position="1"/>
        <end position="156"/>
    </location>
</feature>
<protein>
    <recommendedName>
        <fullName evidence="1">Small ribosomal subunit protein uS7</fullName>
    </recommendedName>
    <alternativeName>
        <fullName evidence="2">30S ribosomal protein S7</fullName>
    </alternativeName>
</protein>
<keyword id="KW-0687">Ribonucleoprotein</keyword>
<keyword id="KW-0689">Ribosomal protein</keyword>
<keyword id="KW-0694">RNA-binding</keyword>
<keyword id="KW-0699">rRNA-binding</keyword>
<keyword id="KW-0820">tRNA-binding</keyword>
<sequence length="156" mass="17598">MSRRHKAEKREINPDPKFGDLVITKFMNAVMLHGKKSVAESIVYGALDAIEATAKSEPVALFHQALDNVAPHIEVRSRRVGGATYQVPVDVRPERRQALAIRWLINAARGRNETTMVDRLSGELLDAANNRGSAVKKREDTHRMAEANRAFSHYRW</sequence>
<accession>Q8YHP4</accession>
<evidence type="ECO:0000255" key="1">
    <source>
        <dbReference type="HAMAP-Rule" id="MF_00480"/>
    </source>
</evidence>
<evidence type="ECO:0000305" key="2"/>
<gene>
    <name evidence="1" type="primary">rpsG</name>
    <name type="ordered locus">BMEI0753</name>
</gene>
<organism>
    <name type="scientific">Brucella melitensis biotype 1 (strain ATCC 23456 / CCUG 17765 / NCTC 10094 / 16M)</name>
    <dbReference type="NCBI Taxonomy" id="224914"/>
    <lineage>
        <taxon>Bacteria</taxon>
        <taxon>Pseudomonadati</taxon>
        <taxon>Pseudomonadota</taxon>
        <taxon>Alphaproteobacteria</taxon>
        <taxon>Hyphomicrobiales</taxon>
        <taxon>Brucellaceae</taxon>
        <taxon>Brucella/Ochrobactrum group</taxon>
        <taxon>Brucella</taxon>
    </lineage>
</organism>
<proteinExistence type="inferred from homology"/>